<feature type="chain" id="PRO_0000113557" description="Serine hydroxymethyltransferase">
    <location>
        <begin position="1"/>
        <end position="429"/>
    </location>
</feature>
<feature type="binding site" evidence="1">
    <location>
        <position position="128"/>
    </location>
    <ligand>
        <name>(6S)-5,6,7,8-tetrahydrofolate</name>
        <dbReference type="ChEBI" id="CHEBI:57453"/>
    </ligand>
</feature>
<feature type="binding site" evidence="1">
    <location>
        <begin position="132"/>
        <end position="134"/>
    </location>
    <ligand>
        <name>(6S)-5,6,7,8-tetrahydrofolate</name>
        <dbReference type="ChEBI" id="CHEBI:57453"/>
    </ligand>
</feature>
<feature type="site" description="Plays an important role in substrate specificity" evidence="1">
    <location>
        <position position="236"/>
    </location>
</feature>
<feature type="modified residue" description="N6-(pyridoxal phosphate)lysine" evidence="1">
    <location>
        <position position="237"/>
    </location>
</feature>
<comment type="function">
    <text evidence="1">Catalyzes the reversible interconversion of serine and glycine with tetrahydrofolate (THF) serving as the one-carbon carrier. This reaction serves as the major source of one-carbon groups required for the biosynthesis of purines, thymidylate, methionine, and other important biomolecules. Also exhibits THF-independent aldolase activity toward beta-hydroxyamino acids, producing glycine and aldehydes, via a retro-aldol mechanism.</text>
</comment>
<comment type="catalytic activity">
    <reaction evidence="1">
        <text>(6R)-5,10-methylene-5,6,7,8-tetrahydrofolate + glycine + H2O = (6S)-5,6,7,8-tetrahydrofolate + L-serine</text>
        <dbReference type="Rhea" id="RHEA:15481"/>
        <dbReference type="ChEBI" id="CHEBI:15377"/>
        <dbReference type="ChEBI" id="CHEBI:15636"/>
        <dbReference type="ChEBI" id="CHEBI:33384"/>
        <dbReference type="ChEBI" id="CHEBI:57305"/>
        <dbReference type="ChEBI" id="CHEBI:57453"/>
        <dbReference type="EC" id="2.1.2.1"/>
    </reaction>
</comment>
<comment type="cofactor">
    <cofactor evidence="1">
        <name>pyridoxal 5'-phosphate</name>
        <dbReference type="ChEBI" id="CHEBI:597326"/>
    </cofactor>
</comment>
<comment type="pathway">
    <text evidence="1">One-carbon metabolism; tetrahydrofolate interconversion.</text>
</comment>
<comment type="pathway">
    <text evidence="1">Amino-acid biosynthesis; glycine biosynthesis; glycine from L-serine: step 1/1.</text>
</comment>
<comment type="subunit">
    <text evidence="1">Homodimer.</text>
</comment>
<comment type="subcellular location">
    <subcellularLocation>
        <location evidence="1">Cytoplasm</location>
    </subcellularLocation>
</comment>
<comment type="similarity">
    <text evidence="1">Belongs to the SHMT family.</text>
</comment>
<organism>
    <name type="scientific">Caulobacter vibrioides (strain ATCC 19089 / CIP 103742 / CB 15)</name>
    <name type="common">Caulobacter crescentus</name>
    <dbReference type="NCBI Taxonomy" id="190650"/>
    <lineage>
        <taxon>Bacteria</taxon>
        <taxon>Pseudomonadati</taxon>
        <taxon>Pseudomonadota</taxon>
        <taxon>Alphaproteobacteria</taxon>
        <taxon>Caulobacterales</taxon>
        <taxon>Caulobacteraceae</taxon>
        <taxon>Caulobacter</taxon>
    </lineage>
</organism>
<accession>Q9A8J6</accession>
<evidence type="ECO:0000255" key="1">
    <source>
        <dbReference type="HAMAP-Rule" id="MF_00051"/>
    </source>
</evidence>
<reference key="1">
    <citation type="journal article" date="2001" name="Proc. Natl. Acad. Sci. U.S.A.">
        <title>Complete genome sequence of Caulobacter crescentus.</title>
        <authorList>
            <person name="Nierman W.C."/>
            <person name="Feldblyum T.V."/>
            <person name="Laub M.T."/>
            <person name="Paulsen I.T."/>
            <person name="Nelson K.E."/>
            <person name="Eisen J.A."/>
            <person name="Heidelberg J.F."/>
            <person name="Alley M.R.K."/>
            <person name="Ohta N."/>
            <person name="Maddock J.R."/>
            <person name="Potocka I."/>
            <person name="Nelson W.C."/>
            <person name="Newton A."/>
            <person name="Stephens C."/>
            <person name="Phadke N.D."/>
            <person name="Ely B."/>
            <person name="DeBoy R.T."/>
            <person name="Dodson R.J."/>
            <person name="Durkin A.S."/>
            <person name="Gwinn M.L."/>
            <person name="Haft D.H."/>
            <person name="Kolonay J.F."/>
            <person name="Smit J."/>
            <person name="Craven M.B."/>
            <person name="Khouri H.M."/>
            <person name="Shetty J."/>
            <person name="Berry K.J."/>
            <person name="Utterback T.R."/>
            <person name="Tran K."/>
            <person name="Wolf A.M."/>
            <person name="Vamathevan J.J."/>
            <person name="Ermolaeva M.D."/>
            <person name="White O."/>
            <person name="Salzberg S.L."/>
            <person name="Venter J.C."/>
            <person name="Shapiro L."/>
            <person name="Fraser C.M."/>
        </authorList>
    </citation>
    <scope>NUCLEOTIDE SEQUENCE [LARGE SCALE GENOMIC DNA]</scope>
    <source>
        <strain>ATCC 19089 / CIP 103742 / CB 15</strain>
    </source>
</reference>
<sequence length="429" mass="45827">MMTQTDLSAFFGADLATADRDIFDRIGRELGRQQNQIELIASENIVSKAVLEAQGSILTNKYAEGYPGKRYYGGCEYVDEIETIAIERAKALFGAGFANVQPHSGSQANQAVFMALLQPGDTFLGMDLAAGGHLTHGSPANQSGKWFKPISYSVRQQDQLIDYDGVAEVAQREKPKLIIAGGSAYSREIDFAKFREIADSIGAYLMVDMAHYAGLIAGGAYANPIPHAHIVTTTTHKTLRGPRGGLVLTNDEAIIKKVNSAVFPGLQGGPLEHVIAAKAVAFGEALQPSFKDYARQVVANARALAEALLKSGVNIVSGGTDSHLMLVDLRPKGVTGRDAEHSLERAYMTCNKNGVPFDTAPFTITSGIRLGTPAGTTRGFKEAEFTRVGELIGEVVNGLAVNGPEGNAAVEAKVREEVLALTGRFPIYN</sequence>
<name>GLYA_CAUVC</name>
<proteinExistence type="inferred from homology"/>
<protein>
    <recommendedName>
        <fullName evidence="1">Serine hydroxymethyltransferase</fullName>
        <shortName evidence="1">SHMT</shortName>
        <shortName evidence="1">Serine methylase</shortName>
        <ecNumber evidence="1">2.1.2.1</ecNumber>
    </recommendedName>
</protein>
<dbReference type="EC" id="2.1.2.1" evidence="1"/>
<dbReference type="EMBL" id="AE005673">
    <property type="protein sequence ID" value="AAK23338.1"/>
    <property type="molecule type" value="Genomic_DNA"/>
</dbReference>
<dbReference type="PIR" id="F87417">
    <property type="entry name" value="F87417"/>
</dbReference>
<dbReference type="RefSeq" id="NP_420170.1">
    <property type="nucleotide sequence ID" value="NC_002696.2"/>
</dbReference>
<dbReference type="SMR" id="Q9A8J6"/>
<dbReference type="STRING" id="190650.CC_1357"/>
<dbReference type="EnsemblBacteria" id="AAK23338">
    <property type="protein sequence ID" value="AAK23338"/>
    <property type="gene ID" value="CC_1357"/>
</dbReference>
<dbReference type="KEGG" id="ccr:CC_1357"/>
<dbReference type="PATRIC" id="fig|190650.5.peg.1387"/>
<dbReference type="eggNOG" id="COG0112">
    <property type="taxonomic scope" value="Bacteria"/>
</dbReference>
<dbReference type="HOGENOM" id="CLU_022477_2_1_5"/>
<dbReference type="BioCyc" id="CAULO:CC1357-MONOMER"/>
<dbReference type="UniPathway" id="UPA00193"/>
<dbReference type="UniPathway" id="UPA00288">
    <property type="reaction ID" value="UER01023"/>
</dbReference>
<dbReference type="Proteomes" id="UP000001816">
    <property type="component" value="Chromosome"/>
</dbReference>
<dbReference type="GO" id="GO:0005829">
    <property type="term" value="C:cytosol"/>
    <property type="evidence" value="ECO:0007669"/>
    <property type="project" value="TreeGrafter"/>
</dbReference>
<dbReference type="GO" id="GO:0004372">
    <property type="term" value="F:glycine hydroxymethyltransferase activity"/>
    <property type="evidence" value="ECO:0007669"/>
    <property type="project" value="UniProtKB-UniRule"/>
</dbReference>
<dbReference type="GO" id="GO:0030170">
    <property type="term" value="F:pyridoxal phosphate binding"/>
    <property type="evidence" value="ECO:0007669"/>
    <property type="project" value="UniProtKB-UniRule"/>
</dbReference>
<dbReference type="GO" id="GO:0019264">
    <property type="term" value="P:glycine biosynthetic process from serine"/>
    <property type="evidence" value="ECO:0007669"/>
    <property type="project" value="UniProtKB-UniRule"/>
</dbReference>
<dbReference type="GO" id="GO:0035999">
    <property type="term" value="P:tetrahydrofolate interconversion"/>
    <property type="evidence" value="ECO:0007669"/>
    <property type="project" value="UniProtKB-UniRule"/>
</dbReference>
<dbReference type="CDD" id="cd00378">
    <property type="entry name" value="SHMT"/>
    <property type="match status" value="1"/>
</dbReference>
<dbReference type="FunFam" id="3.40.640.10:FF:000001">
    <property type="entry name" value="Serine hydroxymethyltransferase"/>
    <property type="match status" value="1"/>
</dbReference>
<dbReference type="Gene3D" id="3.90.1150.10">
    <property type="entry name" value="Aspartate Aminotransferase, domain 1"/>
    <property type="match status" value="1"/>
</dbReference>
<dbReference type="Gene3D" id="3.40.640.10">
    <property type="entry name" value="Type I PLP-dependent aspartate aminotransferase-like (Major domain)"/>
    <property type="match status" value="1"/>
</dbReference>
<dbReference type="HAMAP" id="MF_00051">
    <property type="entry name" value="SHMT"/>
    <property type="match status" value="1"/>
</dbReference>
<dbReference type="InterPro" id="IPR015424">
    <property type="entry name" value="PyrdxlP-dep_Trfase"/>
</dbReference>
<dbReference type="InterPro" id="IPR015421">
    <property type="entry name" value="PyrdxlP-dep_Trfase_major"/>
</dbReference>
<dbReference type="InterPro" id="IPR015422">
    <property type="entry name" value="PyrdxlP-dep_Trfase_small"/>
</dbReference>
<dbReference type="InterPro" id="IPR001085">
    <property type="entry name" value="Ser_HO-MeTrfase"/>
</dbReference>
<dbReference type="InterPro" id="IPR049943">
    <property type="entry name" value="Ser_HO-MeTrfase-like"/>
</dbReference>
<dbReference type="InterPro" id="IPR019798">
    <property type="entry name" value="Ser_HO-MeTrfase_PLP_BS"/>
</dbReference>
<dbReference type="InterPro" id="IPR039429">
    <property type="entry name" value="SHMT-like_dom"/>
</dbReference>
<dbReference type="NCBIfam" id="NF000586">
    <property type="entry name" value="PRK00011.1"/>
    <property type="match status" value="1"/>
</dbReference>
<dbReference type="PANTHER" id="PTHR11680">
    <property type="entry name" value="SERINE HYDROXYMETHYLTRANSFERASE"/>
    <property type="match status" value="1"/>
</dbReference>
<dbReference type="PANTHER" id="PTHR11680:SF35">
    <property type="entry name" value="SERINE HYDROXYMETHYLTRANSFERASE 1"/>
    <property type="match status" value="1"/>
</dbReference>
<dbReference type="Pfam" id="PF00464">
    <property type="entry name" value="SHMT"/>
    <property type="match status" value="1"/>
</dbReference>
<dbReference type="PIRSF" id="PIRSF000412">
    <property type="entry name" value="SHMT"/>
    <property type="match status" value="1"/>
</dbReference>
<dbReference type="SUPFAM" id="SSF53383">
    <property type="entry name" value="PLP-dependent transferases"/>
    <property type="match status" value="1"/>
</dbReference>
<dbReference type="PROSITE" id="PS00096">
    <property type="entry name" value="SHMT"/>
    <property type="match status" value="1"/>
</dbReference>
<keyword id="KW-0028">Amino-acid biosynthesis</keyword>
<keyword id="KW-0963">Cytoplasm</keyword>
<keyword id="KW-0554">One-carbon metabolism</keyword>
<keyword id="KW-0663">Pyridoxal phosphate</keyword>
<keyword id="KW-1185">Reference proteome</keyword>
<keyword id="KW-0808">Transferase</keyword>
<gene>
    <name evidence="1" type="primary">glyA</name>
    <name type="ordered locus">CC_1357</name>
</gene>